<reference key="1">
    <citation type="journal article" date="2009" name="Appl. Environ. Microbiol.">
        <title>Novel features of the polysaccharide-digesting gliding bacterium Flavobacterium johnsoniae as revealed by genome sequence analysis.</title>
        <authorList>
            <person name="McBride M.J."/>
            <person name="Xie G."/>
            <person name="Martens E.C."/>
            <person name="Lapidus A."/>
            <person name="Henrissat B."/>
            <person name="Rhodes R.G."/>
            <person name="Goltsman E."/>
            <person name="Wang W."/>
            <person name="Xu J."/>
            <person name="Hunnicutt D.W."/>
            <person name="Staroscik A.M."/>
            <person name="Hoover T.R."/>
            <person name="Cheng Y.Q."/>
            <person name="Stein J.L."/>
        </authorList>
    </citation>
    <scope>NUCLEOTIDE SEQUENCE [LARGE SCALE GENOMIC DNA]</scope>
    <source>
        <strain>ATCC 17061 / DSM 2064 / JCM 8514 / BCRC 14874 / CCUG 350202 / NBRC 14942 / NCIMB 11054 / UW101</strain>
    </source>
</reference>
<keyword id="KW-0963">Cytoplasm</keyword>
<keyword id="KW-0255">Endonuclease</keyword>
<keyword id="KW-0378">Hydrolase</keyword>
<keyword id="KW-0479">Metal-binding</keyword>
<keyword id="KW-0540">Nuclease</keyword>
<keyword id="KW-0690">Ribosome biogenesis</keyword>
<keyword id="KW-0698">rRNA processing</keyword>
<keyword id="KW-0862">Zinc</keyword>
<accession>A5FL87</accession>
<protein>
    <recommendedName>
        <fullName evidence="1">Endoribonuclease YbeY</fullName>
        <ecNumber evidence="1">3.1.-.-</ecNumber>
    </recommendedName>
</protein>
<organism>
    <name type="scientific">Flavobacterium johnsoniae (strain ATCC 17061 / DSM 2064 / JCM 8514 / BCRC 14874 / CCUG 350202 / NBRC 14942 / NCIMB 11054 / UW101)</name>
    <name type="common">Cytophaga johnsonae</name>
    <dbReference type="NCBI Taxonomy" id="376686"/>
    <lineage>
        <taxon>Bacteria</taxon>
        <taxon>Pseudomonadati</taxon>
        <taxon>Bacteroidota</taxon>
        <taxon>Flavobacteriia</taxon>
        <taxon>Flavobacteriales</taxon>
        <taxon>Flavobacteriaceae</taxon>
        <taxon>Flavobacterium</taxon>
    </lineage>
</organism>
<comment type="function">
    <text evidence="1">Single strand-specific metallo-endoribonuclease involved in late-stage 70S ribosome quality control and in maturation of the 3' terminus of the 16S rRNA.</text>
</comment>
<comment type="cofactor">
    <cofactor evidence="1">
        <name>Zn(2+)</name>
        <dbReference type="ChEBI" id="CHEBI:29105"/>
    </cofactor>
    <text evidence="1">Binds 1 zinc ion.</text>
</comment>
<comment type="subcellular location">
    <subcellularLocation>
        <location evidence="1">Cytoplasm</location>
    </subcellularLocation>
</comment>
<comment type="similarity">
    <text evidence="1">Belongs to the endoribonuclease YbeY family.</text>
</comment>
<proteinExistence type="inferred from homology"/>
<gene>
    <name evidence="1" type="primary">ybeY</name>
    <name type="ordered locus">Fjoh_1004</name>
</gene>
<name>YBEY_FLAJ1</name>
<sequence>MINFNYETEFSLDNEQAFTDWLSAVIVSEEKNEGEINYIFCDDEYLHKINVEYLNHDTLTDIISFDYTVGNEISGDIFVSVERVEDNAKDFNVSFEEELKRVLAHGILHYCGYKDKSDADAELMRSKEDEKIAMFHVEQ</sequence>
<feature type="chain" id="PRO_1000073905" description="Endoribonuclease YbeY">
    <location>
        <begin position="1"/>
        <end position="139"/>
    </location>
</feature>
<feature type="binding site" evidence="1">
    <location>
        <position position="105"/>
    </location>
    <ligand>
        <name>Zn(2+)</name>
        <dbReference type="ChEBI" id="CHEBI:29105"/>
        <note>catalytic</note>
    </ligand>
</feature>
<feature type="binding site" evidence="1">
    <location>
        <position position="109"/>
    </location>
    <ligand>
        <name>Zn(2+)</name>
        <dbReference type="ChEBI" id="CHEBI:29105"/>
        <note>catalytic</note>
    </ligand>
</feature>
<feature type="binding site" evidence="1">
    <location>
        <position position="115"/>
    </location>
    <ligand>
        <name>Zn(2+)</name>
        <dbReference type="ChEBI" id="CHEBI:29105"/>
        <note>catalytic</note>
    </ligand>
</feature>
<dbReference type="EC" id="3.1.-.-" evidence="1"/>
<dbReference type="EMBL" id="CP000685">
    <property type="protein sequence ID" value="ABQ04037.1"/>
    <property type="molecule type" value="Genomic_DNA"/>
</dbReference>
<dbReference type="RefSeq" id="WP_012023090.1">
    <property type="nucleotide sequence ID" value="NC_009441.1"/>
</dbReference>
<dbReference type="SMR" id="A5FL87"/>
<dbReference type="STRING" id="376686.Fjoh_1004"/>
<dbReference type="KEGG" id="fjo:Fjoh_1004"/>
<dbReference type="eggNOG" id="COG0319">
    <property type="taxonomic scope" value="Bacteria"/>
</dbReference>
<dbReference type="HOGENOM" id="CLU_106710_3_3_10"/>
<dbReference type="OrthoDB" id="9811984at2"/>
<dbReference type="Proteomes" id="UP000006694">
    <property type="component" value="Chromosome"/>
</dbReference>
<dbReference type="GO" id="GO:0005737">
    <property type="term" value="C:cytoplasm"/>
    <property type="evidence" value="ECO:0007669"/>
    <property type="project" value="UniProtKB-SubCell"/>
</dbReference>
<dbReference type="GO" id="GO:0004222">
    <property type="term" value="F:metalloendopeptidase activity"/>
    <property type="evidence" value="ECO:0007669"/>
    <property type="project" value="InterPro"/>
</dbReference>
<dbReference type="GO" id="GO:0004521">
    <property type="term" value="F:RNA endonuclease activity"/>
    <property type="evidence" value="ECO:0007669"/>
    <property type="project" value="UniProtKB-UniRule"/>
</dbReference>
<dbReference type="GO" id="GO:0008270">
    <property type="term" value="F:zinc ion binding"/>
    <property type="evidence" value="ECO:0007669"/>
    <property type="project" value="UniProtKB-UniRule"/>
</dbReference>
<dbReference type="GO" id="GO:0006364">
    <property type="term" value="P:rRNA processing"/>
    <property type="evidence" value="ECO:0007669"/>
    <property type="project" value="UniProtKB-UniRule"/>
</dbReference>
<dbReference type="Gene3D" id="3.40.390.30">
    <property type="entry name" value="Metalloproteases ('zincins'), catalytic domain"/>
    <property type="match status" value="1"/>
</dbReference>
<dbReference type="HAMAP" id="MF_00009">
    <property type="entry name" value="Endoribonucl_YbeY"/>
    <property type="match status" value="1"/>
</dbReference>
<dbReference type="InterPro" id="IPR023091">
    <property type="entry name" value="MetalPrtase_cat_dom_sf_prd"/>
</dbReference>
<dbReference type="InterPro" id="IPR002036">
    <property type="entry name" value="YbeY"/>
</dbReference>
<dbReference type="NCBIfam" id="TIGR00043">
    <property type="entry name" value="rRNA maturation RNase YbeY"/>
    <property type="match status" value="1"/>
</dbReference>
<dbReference type="PANTHER" id="PTHR46986">
    <property type="entry name" value="ENDORIBONUCLEASE YBEY, CHLOROPLASTIC"/>
    <property type="match status" value="1"/>
</dbReference>
<dbReference type="PANTHER" id="PTHR46986:SF1">
    <property type="entry name" value="ENDORIBONUCLEASE YBEY, CHLOROPLASTIC"/>
    <property type="match status" value="1"/>
</dbReference>
<dbReference type="Pfam" id="PF02130">
    <property type="entry name" value="YbeY"/>
    <property type="match status" value="1"/>
</dbReference>
<dbReference type="SUPFAM" id="SSF55486">
    <property type="entry name" value="Metalloproteases ('zincins'), catalytic domain"/>
    <property type="match status" value="1"/>
</dbReference>
<evidence type="ECO:0000255" key="1">
    <source>
        <dbReference type="HAMAP-Rule" id="MF_00009"/>
    </source>
</evidence>